<proteinExistence type="inferred from homology"/>
<reference key="1">
    <citation type="journal article" date="2009" name="J. Bacteriol.">
        <title>Complete genome sequence of Macrococcus caseolyticus strain JCSCS5402, reflecting the ancestral genome of the human-pathogenic staphylococci.</title>
        <authorList>
            <person name="Baba T."/>
            <person name="Kuwahara-Arai K."/>
            <person name="Uchiyama I."/>
            <person name="Takeuchi F."/>
            <person name="Ito T."/>
            <person name="Hiramatsu K."/>
        </authorList>
    </citation>
    <scope>NUCLEOTIDE SEQUENCE [LARGE SCALE GENOMIC DNA]</scope>
    <source>
        <strain>JCSC5402</strain>
    </source>
</reference>
<gene>
    <name evidence="1" type="primary">rpsD</name>
    <name type="ordered locus">MCCL_1390</name>
</gene>
<accession>B9E7C9</accession>
<dbReference type="EMBL" id="AP009484">
    <property type="protein sequence ID" value="BAH18097.1"/>
    <property type="molecule type" value="Genomic_DNA"/>
</dbReference>
<dbReference type="RefSeq" id="WP_012657295.1">
    <property type="nucleotide sequence ID" value="NC_011999.1"/>
</dbReference>
<dbReference type="SMR" id="B9E7C9"/>
<dbReference type="STRING" id="458233.MCCL_1390"/>
<dbReference type="GeneID" id="61128706"/>
<dbReference type="KEGG" id="mcl:MCCL_1390"/>
<dbReference type="eggNOG" id="COG0522">
    <property type="taxonomic scope" value="Bacteria"/>
</dbReference>
<dbReference type="HOGENOM" id="CLU_092403_0_1_9"/>
<dbReference type="OrthoDB" id="9803672at2"/>
<dbReference type="Proteomes" id="UP000001383">
    <property type="component" value="Chromosome"/>
</dbReference>
<dbReference type="GO" id="GO:0015935">
    <property type="term" value="C:small ribosomal subunit"/>
    <property type="evidence" value="ECO:0007669"/>
    <property type="project" value="InterPro"/>
</dbReference>
<dbReference type="GO" id="GO:0019843">
    <property type="term" value="F:rRNA binding"/>
    <property type="evidence" value="ECO:0007669"/>
    <property type="project" value="UniProtKB-UniRule"/>
</dbReference>
<dbReference type="GO" id="GO:0003735">
    <property type="term" value="F:structural constituent of ribosome"/>
    <property type="evidence" value="ECO:0007669"/>
    <property type="project" value="InterPro"/>
</dbReference>
<dbReference type="GO" id="GO:0042274">
    <property type="term" value="P:ribosomal small subunit biogenesis"/>
    <property type="evidence" value="ECO:0007669"/>
    <property type="project" value="TreeGrafter"/>
</dbReference>
<dbReference type="GO" id="GO:0006412">
    <property type="term" value="P:translation"/>
    <property type="evidence" value="ECO:0007669"/>
    <property type="project" value="UniProtKB-UniRule"/>
</dbReference>
<dbReference type="CDD" id="cd00165">
    <property type="entry name" value="S4"/>
    <property type="match status" value="1"/>
</dbReference>
<dbReference type="FunFam" id="1.10.1050.10:FF:000001">
    <property type="entry name" value="30S ribosomal protein S4"/>
    <property type="match status" value="1"/>
</dbReference>
<dbReference type="FunFam" id="3.10.290.10:FF:000001">
    <property type="entry name" value="30S ribosomal protein S4"/>
    <property type="match status" value="1"/>
</dbReference>
<dbReference type="Gene3D" id="1.10.1050.10">
    <property type="entry name" value="Ribosomal Protein S4 Delta 41, Chain A, domain 1"/>
    <property type="match status" value="1"/>
</dbReference>
<dbReference type="Gene3D" id="3.10.290.10">
    <property type="entry name" value="RNA-binding S4 domain"/>
    <property type="match status" value="1"/>
</dbReference>
<dbReference type="HAMAP" id="MF_01306_B">
    <property type="entry name" value="Ribosomal_uS4_B"/>
    <property type="match status" value="1"/>
</dbReference>
<dbReference type="InterPro" id="IPR022801">
    <property type="entry name" value="Ribosomal_uS4"/>
</dbReference>
<dbReference type="InterPro" id="IPR005709">
    <property type="entry name" value="Ribosomal_uS4_bac-type"/>
</dbReference>
<dbReference type="InterPro" id="IPR001912">
    <property type="entry name" value="Ribosomal_uS4_N"/>
</dbReference>
<dbReference type="InterPro" id="IPR002942">
    <property type="entry name" value="S4_RNA-bd"/>
</dbReference>
<dbReference type="InterPro" id="IPR036986">
    <property type="entry name" value="S4_RNA-bd_sf"/>
</dbReference>
<dbReference type="NCBIfam" id="NF003717">
    <property type="entry name" value="PRK05327.1"/>
    <property type="match status" value="1"/>
</dbReference>
<dbReference type="NCBIfam" id="TIGR01017">
    <property type="entry name" value="rpsD_bact"/>
    <property type="match status" value="1"/>
</dbReference>
<dbReference type="PANTHER" id="PTHR11831">
    <property type="entry name" value="30S 40S RIBOSOMAL PROTEIN"/>
    <property type="match status" value="1"/>
</dbReference>
<dbReference type="PANTHER" id="PTHR11831:SF4">
    <property type="entry name" value="SMALL RIBOSOMAL SUBUNIT PROTEIN US4M"/>
    <property type="match status" value="1"/>
</dbReference>
<dbReference type="Pfam" id="PF00163">
    <property type="entry name" value="Ribosomal_S4"/>
    <property type="match status" value="1"/>
</dbReference>
<dbReference type="Pfam" id="PF01479">
    <property type="entry name" value="S4"/>
    <property type="match status" value="1"/>
</dbReference>
<dbReference type="SMART" id="SM01390">
    <property type="entry name" value="Ribosomal_S4"/>
    <property type="match status" value="1"/>
</dbReference>
<dbReference type="SMART" id="SM00363">
    <property type="entry name" value="S4"/>
    <property type="match status" value="1"/>
</dbReference>
<dbReference type="SUPFAM" id="SSF55174">
    <property type="entry name" value="Alpha-L RNA-binding motif"/>
    <property type="match status" value="1"/>
</dbReference>
<dbReference type="PROSITE" id="PS50889">
    <property type="entry name" value="S4"/>
    <property type="match status" value="1"/>
</dbReference>
<sequence>MARFTGSTWKKSRRLGISLSGTGKELERRPYAPGQHGPNQRKKLSEYGLQLQEKQKLRYMYGINERQFRTIFDRAGKMKGIHGANFMALLASRLDAVVYQLGLARTRRQARQLVNHGHIMVDGARVDIPSYQLKPGQVISVREKSQKLNIIAESVELSNHVPEYLTFDADKLEGTFVRVPERSELSAEINEQLIVEYYSR</sequence>
<comment type="function">
    <text evidence="1">One of the primary rRNA binding proteins, it binds directly to 16S rRNA where it nucleates assembly of the body of the 30S subunit.</text>
</comment>
<comment type="function">
    <text evidence="1">With S5 and S12 plays an important role in translational accuracy.</text>
</comment>
<comment type="subunit">
    <text evidence="1">Part of the 30S ribosomal subunit. Contacts protein S5. The interaction surface between S4 and S5 is involved in control of translational fidelity.</text>
</comment>
<comment type="similarity">
    <text evidence="1">Belongs to the universal ribosomal protein uS4 family.</text>
</comment>
<evidence type="ECO:0000255" key="1">
    <source>
        <dbReference type="HAMAP-Rule" id="MF_01306"/>
    </source>
</evidence>
<evidence type="ECO:0000305" key="2"/>
<name>RS4_MACCJ</name>
<feature type="chain" id="PRO_1000165409" description="Small ribosomal subunit protein uS4">
    <location>
        <begin position="1"/>
        <end position="200"/>
    </location>
</feature>
<feature type="domain" description="S4 RNA-binding" evidence="1">
    <location>
        <begin position="92"/>
        <end position="155"/>
    </location>
</feature>
<organism>
    <name type="scientific">Macrococcus caseolyticus (strain JCSC5402)</name>
    <name type="common">Macrococcoides caseolyticum</name>
    <dbReference type="NCBI Taxonomy" id="458233"/>
    <lineage>
        <taxon>Bacteria</taxon>
        <taxon>Bacillati</taxon>
        <taxon>Bacillota</taxon>
        <taxon>Bacilli</taxon>
        <taxon>Bacillales</taxon>
        <taxon>Staphylococcaceae</taxon>
        <taxon>Macrococcoides</taxon>
    </lineage>
</organism>
<protein>
    <recommendedName>
        <fullName evidence="1">Small ribosomal subunit protein uS4</fullName>
    </recommendedName>
    <alternativeName>
        <fullName evidence="2">30S ribosomal protein S4</fullName>
    </alternativeName>
</protein>
<keyword id="KW-1185">Reference proteome</keyword>
<keyword id="KW-0687">Ribonucleoprotein</keyword>
<keyword id="KW-0689">Ribosomal protein</keyword>
<keyword id="KW-0694">RNA-binding</keyword>
<keyword id="KW-0699">rRNA-binding</keyword>